<gene>
    <name type="primary">snr-7</name>
    <name type="ORF">Y71F9B.4</name>
</gene>
<proteinExistence type="evidence at protein level"/>
<organism>
    <name type="scientific">Caenorhabditis elegans</name>
    <dbReference type="NCBI Taxonomy" id="6239"/>
    <lineage>
        <taxon>Eukaryota</taxon>
        <taxon>Metazoa</taxon>
        <taxon>Ecdysozoa</taxon>
        <taxon>Nematoda</taxon>
        <taxon>Chromadorea</taxon>
        <taxon>Rhabditida</taxon>
        <taxon>Rhabditina</taxon>
        <taxon>Rhabditomorpha</taxon>
        <taxon>Rhabditoidea</taxon>
        <taxon>Rhabditidae</taxon>
        <taxon>Peloderinae</taxon>
        <taxon>Caenorhabditis</taxon>
    </lineage>
</organism>
<reference key="1">
    <citation type="journal article" date="1998" name="Science">
        <title>Genome sequence of the nematode C. elegans: a platform for investigating biology.</title>
        <authorList>
            <consortium name="The C. elegans sequencing consortium"/>
        </authorList>
    </citation>
    <scope>NUCLEOTIDE SEQUENCE [LARGE SCALE GENOMIC DNA]</scope>
    <source>
        <strain>Bristol N2</strain>
    </source>
</reference>
<reference evidence="3" key="2">
    <citation type="submission" date="2000-08" db="EMBL/GenBank/DDBJ databases">
        <title>The Caenorhabditis elegans transcriptome project, a complementary view of the genome.</title>
        <authorList>
            <person name="Kohara Y."/>
            <person name="Shin-i T."/>
            <person name="Suzuki Y."/>
            <person name="Sugano S."/>
            <person name="Potdevin M."/>
            <person name="Thierry-Mieg Y."/>
            <person name="Thierry-Mieg D."/>
            <person name="Thierry-Mieg J."/>
        </authorList>
    </citation>
    <scope>NUCLEOTIDE SEQUENCE [LARGE SCALE MRNA]</scope>
    <source>
        <strain>Bristol N2</strain>
    </source>
</reference>
<accession>Q9N4G9</accession>
<sequence>MSKTHPPELKKYMDKEMDLKLNGNRRVSGILRGFDPFMNMVIDEAVEYQKDGGSVNLGMTVIRGNSVVIMEPKERIS</sequence>
<protein>
    <recommendedName>
        <fullName>Probable small nuclear ribonucleoprotein G</fullName>
        <shortName>snRNP-G</shortName>
    </recommendedName>
    <alternativeName>
        <fullName>Sm protein G</fullName>
        <shortName>Sm-G</shortName>
        <shortName>SmG</shortName>
    </alternativeName>
</protein>
<feature type="chain" id="PRO_0000125547" description="Probable small nuclear ribonucleoprotein G">
    <location>
        <begin position="1"/>
        <end position="77"/>
    </location>
</feature>
<feature type="domain" description="Sm" evidence="2">
    <location>
        <begin position="4"/>
        <end position="76"/>
    </location>
</feature>
<name>RUXG_CAEEL</name>
<comment type="function">
    <text evidence="1">Plays a role in pre-mRNA splicing as a core component of the spliceosomal U1, U2, U4 and U5 small nuclear ribonucleoproteins (snRNPs), the building blocks of the spliceosome (By similarity).</text>
</comment>
<comment type="subunit">
    <text evidence="1">Core component of the spliceosomal U1, U2, U4 and U5 small nuclear ribonucleoproteins (snRNPs), the building blocks of the spliceosome.</text>
</comment>
<comment type="subcellular location">
    <subcellularLocation>
        <location evidence="1">Cytoplasm</location>
        <location evidence="1">Cytosol</location>
    </subcellularLocation>
    <subcellularLocation>
        <location evidence="1">Nucleus</location>
    </subcellularLocation>
</comment>
<comment type="similarity">
    <text evidence="3">Belongs to the snRNP Sm proteins family.</text>
</comment>
<evidence type="ECO:0000250" key="1">
    <source>
        <dbReference type="UniProtKB" id="P62308"/>
    </source>
</evidence>
<evidence type="ECO:0000255" key="2">
    <source>
        <dbReference type="PROSITE-ProRule" id="PRU01346"/>
    </source>
</evidence>
<evidence type="ECO:0000305" key="3"/>
<keyword id="KW-0002">3D-structure</keyword>
<keyword id="KW-0963">Cytoplasm</keyword>
<keyword id="KW-0507">mRNA processing</keyword>
<keyword id="KW-0508">mRNA splicing</keyword>
<keyword id="KW-0539">Nucleus</keyword>
<keyword id="KW-1185">Reference proteome</keyword>
<keyword id="KW-0687">Ribonucleoprotein</keyword>
<keyword id="KW-0694">RNA-binding</keyword>
<keyword id="KW-0747">Spliceosome</keyword>
<dbReference type="EMBL" id="FO081276">
    <property type="protein sequence ID" value="CCD70411.1"/>
    <property type="molecule type" value="Genomic_DNA"/>
</dbReference>
<dbReference type="EMBL" id="AF303264">
    <property type="protein sequence ID" value="AAG50222.1"/>
    <property type="molecule type" value="mRNA"/>
</dbReference>
<dbReference type="RefSeq" id="NP_491032.1">
    <property type="nucleotide sequence ID" value="NM_058631.8"/>
</dbReference>
<dbReference type="PDB" id="8RO0">
    <property type="method" value="EM"/>
    <property type="resolution" value="2.90 A"/>
    <property type="chains" value="g/n=1-77"/>
</dbReference>
<dbReference type="PDB" id="8RO1">
    <property type="method" value="EM"/>
    <property type="resolution" value="3.00 A"/>
    <property type="chains" value="g/n=1-77"/>
</dbReference>
<dbReference type="PDBsum" id="8RO0"/>
<dbReference type="PDBsum" id="8RO1"/>
<dbReference type="EMDB" id="EMD-19397"/>
<dbReference type="EMDB" id="EMD-19398"/>
<dbReference type="SMR" id="Q9N4G9"/>
<dbReference type="BioGRID" id="37315">
    <property type="interactions" value="37"/>
</dbReference>
<dbReference type="FunCoup" id="Q9N4G9">
    <property type="interactions" value="2255"/>
</dbReference>
<dbReference type="IntAct" id="Q9N4G9">
    <property type="interactions" value="5"/>
</dbReference>
<dbReference type="STRING" id="6239.Y71F9B.4.1"/>
<dbReference type="PaxDb" id="6239-Y71F9B.4.1"/>
<dbReference type="PeptideAtlas" id="Q9N4G9"/>
<dbReference type="EnsemblMetazoa" id="Y71F9B.4.1">
    <property type="protein sequence ID" value="Y71F9B.4.1"/>
    <property type="gene ID" value="WBGene00004920"/>
</dbReference>
<dbReference type="GeneID" id="171834"/>
<dbReference type="KEGG" id="cel:CELE_Y71F9B.4"/>
<dbReference type="UCSC" id="Y71F9B.4">
    <property type="organism name" value="c. elegans"/>
</dbReference>
<dbReference type="AGR" id="WB:WBGene00004920"/>
<dbReference type="CTD" id="171834"/>
<dbReference type="WormBase" id="Y71F9B.4">
    <property type="protein sequence ID" value="CE22871"/>
    <property type="gene ID" value="WBGene00004920"/>
    <property type="gene designation" value="snr-7"/>
</dbReference>
<dbReference type="eggNOG" id="KOG1780">
    <property type="taxonomic scope" value="Eukaryota"/>
</dbReference>
<dbReference type="GeneTree" id="ENSGT00940000176059"/>
<dbReference type="HOGENOM" id="CLU_076902_10_1_1"/>
<dbReference type="InParanoid" id="Q9N4G9"/>
<dbReference type="OMA" id="CMEMATS"/>
<dbReference type="OrthoDB" id="2146at2759"/>
<dbReference type="PhylomeDB" id="Q9N4G9"/>
<dbReference type="Reactome" id="R-CEL-111367">
    <property type="pathway name" value="SLBP independent Processing of Histone Pre-mRNAs"/>
</dbReference>
<dbReference type="Reactome" id="R-CEL-191859">
    <property type="pathway name" value="snRNP Assembly"/>
</dbReference>
<dbReference type="Reactome" id="R-CEL-72163">
    <property type="pathway name" value="mRNA Splicing - Major Pathway"/>
</dbReference>
<dbReference type="Reactome" id="R-CEL-72165">
    <property type="pathway name" value="mRNA Splicing - Minor Pathway"/>
</dbReference>
<dbReference type="Reactome" id="R-CEL-73856">
    <property type="pathway name" value="RNA Polymerase II Transcription Termination"/>
</dbReference>
<dbReference type="Reactome" id="R-CEL-77588">
    <property type="pathway name" value="SLBP Dependent Processing of Replication-Dependent Histone Pre-mRNAs"/>
</dbReference>
<dbReference type="PRO" id="PR:Q9N4G9"/>
<dbReference type="Proteomes" id="UP000001940">
    <property type="component" value="Chromosome I"/>
</dbReference>
<dbReference type="Bgee" id="WBGene00004920">
    <property type="expression patterns" value="Expressed in germ line (C elegans) and 4 other cell types or tissues"/>
</dbReference>
<dbReference type="GO" id="GO:0071013">
    <property type="term" value="C:catalytic step 2 spliceosome"/>
    <property type="evidence" value="ECO:0000318"/>
    <property type="project" value="GO_Central"/>
</dbReference>
<dbReference type="GO" id="GO:0005829">
    <property type="term" value="C:cytosol"/>
    <property type="evidence" value="ECO:0007669"/>
    <property type="project" value="UniProtKB-SubCell"/>
</dbReference>
<dbReference type="GO" id="GO:0043186">
    <property type="term" value="C:P granule"/>
    <property type="evidence" value="ECO:0000314"/>
    <property type="project" value="WormBase"/>
</dbReference>
<dbReference type="GO" id="GO:0071011">
    <property type="term" value="C:precatalytic spliceosome"/>
    <property type="evidence" value="ECO:0000318"/>
    <property type="project" value="GO_Central"/>
</dbReference>
<dbReference type="GO" id="GO:0034719">
    <property type="term" value="C:SMN-Sm protein complex"/>
    <property type="evidence" value="ECO:0000318"/>
    <property type="project" value="GO_Central"/>
</dbReference>
<dbReference type="GO" id="GO:0097526">
    <property type="term" value="C:spliceosomal tri-snRNP complex"/>
    <property type="evidence" value="ECO:0000318"/>
    <property type="project" value="GO_Central"/>
</dbReference>
<dbReference type="GO" id="GO:0005685">
    <property type="term" value="C:U1 snRNP"/>
    <property type="evidence" value="ECO:0000318"/>
    <property type="project" value="GO_Central"/>
</dbReference>
<dbReference type="GO" id="GO:0005689">
    <property type="term" value="C:U12-type spliceosomal complex"/>
    <property type="evidence" value="ECO:0000318"/>
    <property type="project" value="GO_Central"/>
</dbReference>
<dbReference type="GO" id="GO:0005686">
    <property type="term" value="C:U2 snRNP"/>
    <property type="evidence" value="ECO:0000318"/>
    <property type="project" value="GO_Central"/>
</dbReference>
<dbReference type="GO" id="GO:0071004">
    <property type="term" value="C:U2-type prespliceosome"/>
    <property type="evidence" value="ECO:0000318"/>
    <property type="project" value="GO_Central"/>
</dbReference>
<dbReference type="GO" id="GO:0005687">
    <property type="term" value="C:U4 snRNP"/>
    <property type="evidence" value="ECO:0000318"/>
    <property type="project" value="GO_Central"/>
</dbReference>
<dbReference type="GO" id="GO:0005682">
    <property type="term" value="C:U5 snRNP"/>
    <property type="evidence" value="ECO:0000318"/>
    <property type="project" value="GO_Central"/>
</dbReference>
<dbReference type="GO" id="GO:0003723">
    <property type="term" value="F:RNA binding"/>
    <property type="evidence" value="ECO:0007669"/>
    <property type="project" value="UniProtKB-KW"/>
</dbReference>
<dbReference type="GO" id="GO:0000398">
    <property type="term" value="P:mRNA splicing, via spliceosome"/>
    <property type="evidence" value="ECO:0000318"/>
    <property type="project" value="GO_Central"/>
</dbReference>
<dbReference type="CDD" id="cd01719">
    <property type="entry name" value="Sm_G"/>
    <property type="match status" value="1"/>
</dbReference>
<dbReference type="FunFam" id="2.30.30.100:FF:000099">
    <property type="entry name" value="Small nuclear ribonucleoprotein G"/>
    <property type="match status" value="1"/>
</dbReference>
<dbReference type="Gene3D" id="2.30.30.100">
    <property type="match status" value="1"/>
</dbReference>
<dbReference type="InterPro" id="IPR044641">
    <property type="entry name" value="Lsm7/SmG-like"/>
</dbReference>
<dbReference type="InterPro" id="IPR010920">
    <property type="entry name" value="LSM_dom_sf"/>
</dbReference>
<dbReference type="InterPro" id="IPR047575">
    <property type="entry name" value="Sm"/>
</dbReference>
<dbReference type="InterPro" id="IPR001163">
    <property type="entry name" value="Sm_dom_euk/arc"/>
</dbReference>
<dbReference type="InterPro" id="IPR034098">
    <property type="entry name" value="Sm_G"/>
</dbReference>
<dbReference type="PANTHER" id="PTHR10553">
    <property type="entry name" value="SMALL NUCLEAR RIBONUCLEOPROTEIN"/>
    <property type="match status" value="1"/>
</dbReference>
<dbReference type="PANTHER" id="PTHR10553:SF2">
    <property type="entry name" value="SMALL NUCLEAR RIBONUCLEOPROTEIN G"/>
    <property type="match status" value="1"/>
</dbReference>
<dbReference type="Pfam" id="PF01423">
    <property type="entry name" value="LSM"/>
    <property type="match status" value="1"/>
</dbReference>
<dbReference type="PIRSF" id="PIRSF037188">
    <property type="entry name" value="U6_snRNA_Lsm7"/>
    <property type="match status" value="1"/>
</dbReference>
<dbReference type="SMART" id="SM00651">
    <property type="entry name" value="Sm"/>
    <property type="match status" value="1"/>
</dbReference>
<dbReference type="SUPFAM" id="SSF50182">
    <property type="entry name" value="Sm-like ribonucleoproteins"/>
    <property type="match status" value="1"/>
</dbReference>
<dbReference type="PROSITE" id="PS52002">
    <property type="entry name" value="SM"/>
    <property type="match status" value="1"/>
</dbReference>